<dbReference type="EC" id="2.1.1.72" evidence="6"/>
<dbReference type="EMBL" id="M86639">
    <property type="protein sequence ID" value="AAB92381.1"/>
    <property type="molecule type" value="Genomic_DNA"/>
</dbReference>
<dbReference type="EMBL" id="JF411744">
    <property type="protein sequence ID" value="AAC97062.2"/>
    <property type="molecule type" value="Genomic_DNA"/>
</dbReference>
<dbReference type="PIR" id="S35442">
    <property type="entry name" value="S27901"/>
</dbReference>
<dbReference type="PIR" id="T17743">
    <property type="entry name" value="T17743"/>
</dbReference>
<dbReference type="RefSeq" id="NP_048601.2">
    <property type="nucleotide sequence ID" value="NC_000852.5"/>
</dbReference>
<dbReference type="REBASE" id="3542">
    <property type="entry name" value="M.CviAII"/>
</dbReference>
<dbReference type="GeneID" id="918299"/>
<dbReference type="KEGG" id="vg:918299"/>
<dbReference type="OrthoDB" id="41175at10239"/>
<dbReference type="PRO" id="PR:P31118"/>
<dbReference type="Proteomes" id="UP000000862">
    <property type="component" value="Genome"/>
</dbReference>
<dbReference type="GO" id="GO:0003677">
    <property type="term" value="F:DNA binding"/>
    <property type="evidence" value="ECO:0007669"/>
    <property type="project" value="UniProtKB-KW"/>
</dbReference>
<dbReference type="GO" id="GO:0009007">
    <property type="term" value="F:site-specific DNA-methyltransferase (adenine-specific) activity"/>
    <property type="evidence" value="ECO:0007669"/>
    <property type="project" value="UniProtKB-EC"/>
</dbReference>
<dbReference type="GO" id="GO:0009307">
    <property type="term" value="P:DNA restriction-modification system"/>
    <property type="evidence" value="ECO:0007669"/>
    <property type="project" value="UniProtKB-KW"/>
</dbReference>
<dbReference type="GO" id="GO:0032259">
    <property type="term" value="P:methylation"/>
    <property type="evidence" value="ECO:0007669"/>
    <property type="project" value="UniProtKB-KW"/>
</dbReference>
<dbReference type="Gene3D" id="1.10.1020.10">
    <property type="entry name" value="Adenine-specific Methyltransferase, Domain 2"/>
    <property type="match status" value="1"/>
</dbReference>
<dbReference type="Gene3D" id="3.40.50.150">
    <property type="entry name" value="Vaccinia Virus protein VP39"/>
    <property type="match status" value="1"/>
</dbReference>
<dbReference type="InterPro" id="IPR023095">
    <property type="entry name" value="Ade_MeTrfase_dom_2"/>
</dbReference>
<dbReference type="InterPro" id="IPR002052">
    <property type="entry name" value="DNA_methylase_N6_adenine_CS"/>
</dbReference>
<dbReference type="InterPro" id="IPR012327">
    <property type="entry name" value="MeTrfase_D12"/>
</dbReference>
<dbReference type="InterPro" id="IPR029063">
    <property type="entry name" value="SAM-dependent_MTases_sf"/>
</dbReference>
<dbReference type="Pfam" id="PF02086">
    <property type="entry name" value="MethyltransfD12"/>
    <property type="match status" value="1"/>
</dbReference>
<dbReference type="PRINTS" id="PR00505">
    <property type="entry name" value="D12N6MTFRASE"/>
</dbReference>
<dbReference type="SUPFAM" id="SSF53335">
    <property type="entry name" value="S-adenosyl-L-methionine-dependent methyltransferases"/>
    <property type="match status" value="1"/>
</dbReference>
<dbReference type="PROSITE" id="PS00092">
    <property type="entry name" value="N6_MTASE"/>
    <property type="match status" value="1"/>
</dbReference>
<reference key="1">
    <citation type="journal article" date="1992" name="Nucleic Acids Res.">
        <title>Characterization of Chlorella virus PBCV-1 CviAII restriction and modification system.</title>
        <authorList>
            <person name="Zhang Y."/>
            <person name="Nelson M."/>
            <person name="Nietfeldt J.W."/>
            <person name="Burbank D.E."/>
            <person name="van Etten J.L."/>
        </authorList>
    </citation>
    <scope>NUCLEOTIDE SEQUENCE [GENOMIC DNA]</scope>
    <scope>FUNCTION</scope>
    <scope>BIOPHYSICOCHEMICAL PROPERTIES</scope>
</reference>
<reference key="2">
    <citation type="journal article" date="1995" name="Virology">
        <title>Analysis of 45 kb of DNA located at the left end of the chlorella virus PBCV-1 genome.</title>
        <authorList>
            <person name="Lu Z."/>
            <person name="Li Y."/>
            <person name="Zhang Y."/>
            <person name="Kutish G.F."/>
            <person name="Rock D.L."/>
            <person name="van Etten J.L."/>
        </authorList>
    </citation>
    <scope>NUCLEOTIDE SEQUENCE [LARGE SCALE GENOMIC DNA]</scope>
    <scope>SEQUENCE REVISION</scope>
</reference>
<reference key="3">
    <citation type="submission" date="2011-02" db="EMBL/GenBank/DDBJ databases">
        <authorList>
            <person name="Dunigan D.D."/>
            <person name="Blanc G."/>
            <person name="Duncan G.A."/>
            <person name="Gurnon J.R."/>
            <person name="Jeanniard A."/>
            <person name="McClung O.W."/>
            <person name="Upton C."/>
            <person name="van Etten J.L."/>
        </authorList>
    </citation>
    <scope>SEQUENCE REVISION TO ASN-115 AND GLY-199</scope>
</reference>
<reference key="4">
    <citation type="journal article" date="2003" name="Nucleic Acids Res.">
        <title>A nomenclature for restriction enzymes, DNA methyltransferases, homing endonucleases and their genes.</title>
        <authorList>
            <person name="Roberts R.J."/>
            <person name="Belfort M."/>
            <person name="Bestor T."/>
            <person name="Bhagwat A.S."/>
            <person name="Bickle T.A."/>
            <person name="Bitinaite J."/>
            <person name="Blumenthal R.M."/>
            <person name="Degtyarev S.K."/>
            <person name="Dryden D.T."/>
            <person name="Dybvig K."/>
            <person name="Firman K."/>
            <person name="Gromova E.S."/>
            <person name="Gumport R.I."/>
            <person name="Halford S.E."/>
            <person name="Hattman S."/>
            <person name="Heitman J."/>
            <person name="Hornby D.P."/>
            <person name="Janulaitis A."/>
            <person name="Jeltsch A."/>
            <person name="Josephsen J."/>
            <person name="Kiss A."/>
            <person name="Klaenhammer T.R."/>
            <person name="Kobayashi I."/>
            <person name="Kong H."/>
            <person name="Krueger D.H."/>
            <person name="Lacks S."/>
            <person name="Marinus M.G."/>
            <person name="Miyahara M."/>
            <person name="Morgan R.D."/>
            <person name="Murray N.E."/>
            <person name="Nagaraja V."/>
            <person name="Piekarowicz A."/>
            <person name="Pingoud A."/>
            <person name="Raleigh E."/>
            <person name="Rao D.N."/>
            <person name="Reich N."/>
            <person name="Repin V.E."/>
            <person name="Selker E.U."/>
            <person name="Shaw P.C."/>
            <person name="Stein D.C."/>
            <person name="Stoddard B.L."/>
            <person name="Szybalski W."/>
            <person name="Trautner T.A."/>
            <person name="Van Etten J.L."/>
            <person name="Vitor J.M."/>
            <person name="Wilson G.G."/>
            <person name="Xu S.Y."/>
        </authorList>
    </citation>
    <scope>NOMENCLATURE</scope>
    <scope>SUBTYPE</scope>
</reference>
<reference key="5">
    <citation type="journal article" date="2010" name="J. Virol.">
        <title>Microarray analysis of Paramecium bursaria chlorella virus 1 transcription.</title>
        <authorList>
            <person name="Yanai-Balser G.M."/>
            <person name="Duncan G.A."/>
            <person name="Eudy J.D."/>
            <person name="Wang D."/>
            <person name="Li X."/>
            <person name="Agarkova I.V."/>
            <person name="Dunigan D.D."/>
            <person name="Van Etten J.L."/>
        </authorList>
    </citation>
    <scope>INDUCTION</scope>
</reference>
<evidence type="ECO:0000269" key="1">
    <source>
    </source>
</evidence>
<evidence type="ECO:0000269" key="2">
    <source>
    </source>
</evidence>
<evidence type="ECO:0000303" key="3">
    <source>
    </source>
</evidence>
<evidence type="ECO:0000303" key="4">
    <source>
    </source>
</evidence>
<evidence type="ECO:0000305" key="5"/>
<evidence type="ECO:0000305" key="6">
    <source>
    </source>
</evidence>
<name>MTC2_PBCV1</name>
<protein>
    <recommendedName>
        <fullName evidence="3">Type II methyltransferase M.CviAII</fullName>
        <shortName evidence="4">M.CviAII</shortName>
        <ecNumber evidence="6">2.1.1.72</ecNumber>
    </recommendedName>
    <alternativeName>
        <fullName>Adenine-specific methyltransferase CviAII</fullName>
    </alternativeName>
    <alternativeName>
        <fullName>Modification methylase CviAII</fullName>
    </alternativeName>
</protein>
<organism>
    <name type="scientific">Paramecium bursaria Chlorella virus 1</name>
    <name type="common">PBCV-1</name>
    <dbReference type="NCBI Taxonomy" id="10506"/>
    <lineage>
        <taxon>Viruses</taxon>
        <taxon>Varidnaviria</taxon>
        <taxon>Bamfordvirae</taxon>
        <taxon>Nucleocytoviricota</taxon>
        <taxon>Megaviricetes</taxon>
        <taxon>Algavirales</taxon>
        <taxon>Phycodnaviridae</taxon>
        <taxon>Chlorovirus</taxon>
    </lineage>
</organism>
<feature type="chain" id="PRO_0000087950" description="Type II methyltransferase M.CviAII">
    <location>
        <begin position="1"/>
        <end position="326"/>
    </location>
</feature>
<accession>P31118</accession>
<accession>O41015</accession>
<accession>Q84569</accession>
<organismHost>
    <name type="scientific">Chlorella</name>
    <dbReference type="NCBI Taxonomy" id="3071"/>
</organismHost>
<sequence length="326" mass="37421">MNRIGYIGSKLKLKDWIFEEISKRTDDTYTKFADLFAGSCIMTHEALEKKYECISNDLETYSYVIMNGLKCPFSDKLQNIIETLDDLDTKDMVIPGFVTLTYSPRGNRMYFTEDNAMRIDIIRENIERMKERVSTDEYNFLLASLLTSADSVKNTSVVYGAYLKKFKKTALKRMVFAPLHTRSTTVTLETFNEDATELGIKTDIAYVDPPYNSRQYGANYFVLNQILTPKEIGNGVTGLPEYKKSSFCRKQEVAMSFHKMLKNVSARLFVISYSSESLLSKGDMVALLSQYGKCEVVVRNHKRFKAQISAVGNDVEEYLFFVYIEQ</sequence>
<comment type="function">
    <text evidence="3 6">An alpha subtype methylase that recognizes the double-stranded sequence 5'-CATG-3', methylates A-2 on both strands and protects the DNA from cleavage by the CviAII endonuclease.</text>
</comment>
<comment type="catalytic activity">
    <reaction evidence="6">
        <text>a 2'-deoxyadenosine in DNA + S-adenosyl-L-methionine = an N(6)-methyl-2'-deoxyadenosine in DNA + S-adenosyl-L-homocysteine + H(+)</text>
        <dbReference type="Rhea" id="RHEA:15197"/>
        <dbReference type="Rhea" id="RHEA-COMP:12418"/>
        <dbReference type="Rhea" id="RHEA-COMP:12419"/>
        <dbReference type="ChEBI" id="CHEBI:15378"/>
        <dbReference type="ChEBI" id="CHEBI:57856"/>
        <dbReference type="ChEBI" id="CHEBI:59789"/>
        <dbReference type="ChEBI" id="CHEBI:90615"/>
        <dbReference type="ChEBI" id="CHEBI:90616"/>
        <dbReference type="EC" id="2.1.1.72"/>
    </reaction>
</comment>
<comment type="biophysicochemical properties">
    <phDependence>
        <text evidence="1">Optimum pH is 8.5-9.0.</text>
    </phDependence>
</comment>
<comment type="induction">
    <text evidence="2">Expressed in the early phase of the viral replicative cycle.</text>
</comment>
<comment type="similarity">
    <text evidence="5">Belongs to the N(4)/N(6)-methyltransferase family.</text>
</comment>
<gene>
    <name type="primary">CVIAIIM</name>
    <name type="ordered locus">A251R</name>
</gene>
<proteinExistence type="evidence at protein level"/>
<keyword id="KW-0238">DNA-binding</keyword>
<keyword id="KW-0489">Methyltransferase</keyword>
<keyword id="KW-1185">Reference proteome</keyword>
<keyword id="KW-0680">Restriction system</keyword>
<keyword id="KW-0949">S-adenosyl-L-methionine</keyword>
<keyword id="KW-0808">Transferase</keyword>